<dbReference type="EC" id="2.3.2.29" evidence="1"/>
<dbReference type="EMBL" id="CP000708">
    <property type="protein sequence ID" value="ABQ61490.1"/>
    <property type="molecule type" value="Genomic_DNA"/>
</dbReference>
<dbReference type="RefSeq" id="WP_004683553.1">
    <property type="nucleotide sequence ID" value="NC_009505.1"/>
</dbReference>
<dbReference type="SMR" id="A5VPT9"/>
<dbReference type="KEGG" id="bov:BOV_0750"/>
<dbReference type="HOGENOM" id="CLU_077607_1_0_5"/>
<dbReference type="Proteomes" id="UP000006383">
    <property type="component" value="Chromosome I"/>
</dbReference>
<dbReference type="GO" id="GO:0005737">
    <property type="term" value="C:cytoplasm"/>
    <property type="evidence" value="ECO:0007669"/>
    <property type="project" value="UniProtKB-SubCell"/>
</dbReference>
<dbReference type="GO" id="GO:0004057">
    <property type="term" value="F:arginyl-tRNA--protein transferase activity"/>
    <property type="evidence" value="ECO:0007669"/>
    <property type="project" value="InterPro"/>
</dbReference>
<dbReference type="GO" id="GO:0008914">
    <property type="term" value="F:leucyl-tRNA--protein transferase activity"/>
    <property type="evidence" value="ECO:0007669"/>
    <property type="project" value="UniProtKB-UniRule"/>
</dbReference>
<dbReference type="GO" id="GO:0071596">
    <property type="term" value="P:ubiquitin-dependent protein catabolic process via the N-end rule pathway"/>
    <property type="evidence" value="ECO:0007669"/>
    <property type="project" value="InterPro"/>
</dbReference>
<dbReference type="HAMAP" id="MF_00689">
    <property type="entry name" value="Bpt"/>
    <property type="match status" value="1"/>
</dbReference>
<dbReference type="InterPro" id="IPR016181">
    <property type="entry name" value="Acyl_CoA_acyltransferase"/>
</dbReference>
<dbReference type="InterPro" id="IPR017138">
    <property type="entry name" value="Asp_Glu_LeuTrfase"/>
</dbReference>
<dbReference type="InterPro" id="IPR030700">
    <property type="entry name" value="N-end_Aminoacyl_Trfase"/>
</dbReference>
<dbReference type="InterPro" id="IPR007472">
    <property type="entry name" value="N-end_Aminoacyl_Trfase_C"/>
</dbReference>
<dbReference type="InterPro" id="IPR007471">
    <property type="entry name" value="N-end_Aminoacyl_Trfase_N"/>
</dbReference>
<dbReference type="NCBIfam" id="NF002341">
    <property type="entry name" value="PRK01305.1-1"/>
    <property type="match status" value="1"/>
</dbReference>
<dbReference type="NCBIfam" id="NF002343">
    <property type="entry name" value="PRK01305.1-4"/>
    <property type="match status" value="1"/>
</dbReference>
<dbReference type="NCBIfam" id="NF002346">
    <property type="entry name" value="PRK01305.2-3"/>
    <property type="match status" value="1"/>
</dbReference>
<dbReference type="PANTHER" id="PTHR21367">
    <property type="entry name" value="ARGININE-TRNA-PROTEIN TRANSFERASE 1"/>
    <property type="match status" value="1"/>
</dbReference>
<dbReference type="PANTHER" id="PTHR21367:SF1">
    <property type="entry name" value="ARGINYL-TRNA--PROTEIN TRANSFERASE 1"/>
    <property type="match status" value="1"/>
</dbReference>
<dbReference type="Pfam" id="PF04377">
    <property type="entry name" value="ATE_C"/>
    <property type="match status" value="1"/>
</dbReference>
<dbReference type="Pfam" id="PF04376">
    <property type="entry name" value="ATE_N"/>
    <property type="match status" value="1"/>
</dbReference>
<dbReference type="PIRSF" id="PIRSF037208">
    <property type="entry name" value="ATE_pro_prd"/>
    <property type="match status" value="1"/>
</dbReference>
<dbReference type="SUPFAM" id="SSF55729">
    <property type="entry name" value="Acyl-CoA N-acyltransferases (Nat)"/>
    <property type="match status" value="1"/>
</dbReference>
<proteinExistence type="inferred from homology"/>
<keyword id="KW-0012">Acyltransferase</keyword>
<keyword id="KW-0963">Cytoplasm</keyword>
<keyword id="KW-0808">Transferase</keyword>
<feature type="chain" id="PRO_1000045123" description="Aspartate/glutamate leucyltransferase">
    <location>
        <begin position="1"/>
        <end position="249"/>
    </location>
</feature>
<gene>
    <name evidence="1" type="primary">bpt</name>
    <name type="ordered locus">BOV_0750</name>
</gene>
<protein>
    <recommendedName>
        <fullName evidence="1">Aspartate/glutamate leucyltransferase</fullName>
        <ecNumber evidence="1">2.3.2.29</ecNumber>
    </recommendedName>
</protein>
<accession>A5VPT9</accession>
<evidence type="ECO:0000255" key="1">
    <source>
        <dbReference type="HAMAP-Rule" id="MF_00689"/>
    </source>
</evidence>
<comment type="function">
    <text evidence="1">Functions in the N-end rule pathway of protein degradation where it conjugates Leu from its aminoacyl-tRNA to the N-termini of proteins containing an N-terminal aspartate or glutamate.</text>
</comment>
<comment type="catalytic activity">
    <reaction evidence="1">
        <text>N-terminal L-glutamyl-[protein] + L-leucyl-tRNA(Leu) = N-terminal L-leucyl-L-glutamyl-[protein] + tRNA(Leu) + H(+)</text>
        <dbReference type="Rhea" id="RHEA:50412"/>
        <dbReference type="Rhea" id="RHEA-COMP:9613"/>
        <dbReference type="Rhea" id="RHEA-COMP:9622"/>
        <dbReference type="Rhea" id="RHEA-COMP:12664"/>
        <dbReference type="Rhea" id="RHEA-COMP:12668"/>
        <dbReference type="ChEBI" id="CHEBI:15378"/>
        <dbReference type="ChEBI" id="CHEBI:64721"/>
        <dbReference type="ChEBI" id="CHEBI:78442"/>
        <dbReference type="ChEBI" id="CHEBI:78494"/>
        <dbReference type="ChEBI" id="CHEBI:133041"/>
        <dbReference type="EC" id="2.3.2.29"/>
    </reaction>
</comment>
<comment type="catalytic activity">
    <reaction evidence="1">
        <text>N-terminal L-aspartyl-[protein] + L-leucyl-tRNA(Leu) = N-terminal L-leucyl-L-aspartyl-[protein] + tRNA(Leu) + H(+)</text>
        <dbReference type="Rhea" id="RHEA:50420"/>
        <dbReference type="Rhea" id="RHEA-COMP:9613"/>
        <dbReference type="Rhea" id="RHEA-COMP:9622"/>
        <dbReference type="Rhea" id="RHEA-COMP:12669"/>
        <dbReference type="Rhea" id="RHEA-COMP:12674"/>
        <dbReference type="ChEBI" id="CHEBI:15378"/>
        <dbReference type="ChEBI" id="CHEBI:64720"/>
        <dbReference type="ChEBI" id="CHEBI:78442"/>
        <dbReference type="ChEBI" id="CHEBI:78494"/>
        <dbReference type="ChEBI" id="CHEBI:133042"/>
        <dbReference type="EC" id="2.3.2.29"/>
    </reaction>
</comment>
<comment type="subcellular location">
    <subcellularLocation>
        <location evidence="1">Cytoplasm</location>
    </subcellularLocation>
</comment>
<comment type="similarity">
    <text evidence="1">Belongs to the R-transferase family. Bpt subfamily.</text>
</comment>
<name>BPT_BRUO2</name>
<reference key="1">
    <citation type="journal article" date="2009" name="PLoS ONE">
        <title>Genome degradation in Brucella ovis corresponds with narrowing of its host range and tissue tropism.</title>
        <authorList>
            <person name="Tsolis R.M."/>
            <person name="Seshadri R."/>
            <person name="Santos R.L."/>
            <person name="Sangari F.J."/>
            <person name="Lobo J.M."/>
            <person name="de Jong M.F."/>
            <person name="Ren Q."/>
            <person name="Myers G."/>
            <person name="Brinkac L.M."/>
            <person name="Nelson W.C."/>
            <person name="Deboy R.T."/>
            <person name="Angiuoli S."/>
            <person name="Khouri H."/>
            <person name="Dimitrov G."/>
            <person name="Robinson J.R."/>
            <person name="Mulligan S."/>
            <person name="Walker R.L."/>
            <person name="Elzer P.E."/>
            <person name="Hassan K.A."/>
            <person name="Paulsen I.T."/>
        </authorList>
    </citation>
    <scope>NUCLEOTIDE SEQUENCE [LARGE SCALE GENOMIC DNA]</scope>
    <source>
        <strain>ATCC 25840 / 63/290 / NCTC 10512</strain>
    </source>
</reference>
<organism>
    <name type="scientific">Brucella ovis (strain ATCC 25840 / 63/290 / NCTC 10512)</name>
    <dbReference type="NCBI Taxonomy" id="444178"/>
    <lineage>
        <taxon>Bacteria</taxon>
        <taxon>Pseudomonadati</taxon>
        <taxon>Pseudomonadota</taxon>
        <taxon>Alphaproteobacteria</taxon>
        <taxon>Hyphomicrobiales</taxon>
        <taxon>Brucellaceae</taxon>
        <taxon>Brucella/Ochrobactrum group</taxon>
        <taxon>Brucella</taxon>
    </lineage>
</organism>
<sequence>MTHQPQQSPQFFLTAPSPCPYLEGQQERKVFTHLVGDKANEINDLLTQGGFRRSQNIAYRPACEVCRACISVRILAGEFEMTRNMRRVWSQNRDLIGRVHKAQPSTEQYALFRDYLDARHRSGGMSDMTVLDYAMMIEDTHVNTQIIEYRRRGPDSFMSAKGDGELIAVALTDVMADGLSMVYSFFSPHMQERSLGTYMILDHIERARAAGLPHVYLGYWVEGSRKMQYKIRFTPQEHLGPRGWQRFEG</sequence>